<organism>
    <name type="scientific">Escherichia coli O157:H7</name>
    <dbReference type="NCBI Taxonomy" id="83334"/>
    <lineage>
        <taxon>Bacteria</taxon>
        <taxon>Pseudomonadati</taxon>
        <taxon>Pseudomonadota</taxon>
        <taxon>Gammaproteobacteria</taxon>
        <taxon>Enterobacterales</taxon>
        <taxon>Enterobacteriaceae</taxon>
        <taxon>Escherichia</taxon>
    </lineage>
</organism>
<dbReference type="EMBL" id="AE005174">
    <property type="protein sequence ID" value="AAG58652.1"/>
    <property type="molecule type" value="Genomic_DNA"/>
</dbReference>
<dbReference type="EMBL" id="BA000007">
    <property type="protein sequence ID" value="BAB37814.1"/>
    <property type="molecule type" value="Genomic_DNA"/>
</dbReference>
<dbReference type="PIR" id="G91177">
    <property type="entry name" value="G91177"/>
</dbReference>
<dbReference type="PIR" id="H86023">
    <property type="entry name" value="H86023"/>
</dbReference>
<dbReference type="RefSeq" id="NP_312418.1">
    <property type="nucleotide sequence ID" value="NC_002695.1"/>
</dbReference>
<dbReference type="RefSeq" id="WP_000965672.1">
    <property type="nucleotide sequence ID" value="NZ_VOAI01000004.1"/>
</dbReference>
<dbReference type="SMR" id="P0AET6"/>
<dbReference type="STRING" id="155864.Z4923"/>
<dbReference type="GeneID" id="915752"/>
<dbReference type="GeneID" id="93778474"/>
<dbReference type="KEGG" id="ece:Z4923"/>
<dbReference type="KEGG" id="ecs:ECs_4391"/>
<dbReference type="PATRIC" id="fig|386585.9.peg.4588"/>
<dbReference type="eggNOG" id="COG3247">
    <property type="taxonomic scope" value="Bacteria"/>
</dbReference>
<dbReference type="HOGENOM" id="CLU_091585_6_0_6"/>
<dbReference type="OMA" id="VRGPQFG"/>
<dbReference type="Proteomes" id="UP000000558">
    <property type="component" value="Chromosome"/>
</dbReference>
<dbReference type="Proteomes" id="UP000002519">
    <property type="component" value="Chromosome"/>
</dbReference>
<dbReference type="GO" id="GO:0005886">
    <property type="term" value="C:plasma membrane"/>
    <property type="evidence" value="ECO:0007669"/>
    <property type="project" value="UniProtKB-SubCell"/>
</dbReference>
<dbReference type="InterPro" id="IPR052712">
    <property type="entry name" value="Acid_resist_chaperone_HdeD"/>
</dbReference>
<dbReference type="InterPro" id="IPR005325">
    <property type="entry name" value="DUF308_memb"/>
</dbReference>
<dbReference type="NCBIfam" id="NF007577">
    <property type="entry name" value="PRK10209.1"/>
    <property type="match status" value="1"/>
</dbReference>
<dbReference type="PANTHER" id="PTHR34989">
    <property type="entry name" value="PROTEIN HDED"/>
    <property type="match status" value="1"/>
</dbReference>
<dbReference type="PANTHER" id="PTHR34989:SF1">
    <property type="entry name" value="PROTEIN HDED"/>
    <property type="match status" value="1"/>
</dbReference>
<dbReference type="Pfam" id="PF03729">
    <property type="entry name" value="DUF308"/>
    <property type="match status" value="2"/>
</dbReference>
<proteinExistence type="inferred from homology"/>
<keyword id="KW-0997">Cell inner membrane</keyword>
<keyword id="KW-1003">Cell membrane</keyword>
<keyword id="KW-0472">Membrane</keyword>
<keyword id="KW-1185">Reference proteome</keyword>
<keyword id="KW-0812">Transmembrane</keyword>
<keyword id="KW-1133">Transmembrane helix</keyword>
<reference key="1">
    <citation type="journal article" date="2001" name="Nature">
        <title>Genome sequence of enterohaemorrhagic Escherichia coli O157:H7.</title>
        <authorList>
            <person name="Perna N.T."/>
            <person name="Plunkett G. III"/>
            <person name="Burland V."/>
            <person name="Mau B."/>
            <person name="Glasner J.D."/>
            <person name="Rose D.J."/>
            <person name="Mayhew G.F."/>
            <person name="Evans P.S."/>
            <person name="Gregor J."/>
            <person name="Kirkpatrick H.A."/>
            <person name="Posfai G."/>
            <person name="Hackett J."/>
            <person name="Klink S."/>
            <person name="Boutin A."/>
            <person name="Shao Y."/>
            <person name="Miller L."/>
            <person name="Grotbeck E.J."/>
            <person name="Davis N.W."/>
            <person name="Lim A."/>
            <person name="Dimalanta E.T."/>
            <person name="Potamousis K."/>
            <person name="Apodaca J."/>
            <person name="Anantharaman T.S."/>
            <person name="Lin J."/>
            <person name="Yen G."/>
            <person name="Schwartz D.C."/>
            <person name="Welch R.A."/>
            <person name="Blattner F.R."/>
        </authorList>
    </citation>
    <scope>NUCLEOTIDE SEQUENCE [LARGE SCALE GENOMIC DNA]</scope>
    <source>
        <strain>O157:H7 / EDL933 / ATCC 700927 / EHEC</strain>
    </source>
</reference>
<reference key="2">
    <citation type="journal article" date="2001" name="DNA Res.">
        <title>Complete genome sequence of enterohemorrhagic Escherichia coli O157:H7 and genomic comparison with a laboratory strain K-12.</title>
        <authorList>
            <person name="Hayashi T."/>
            <person name="Makino K."/>
            <person name="Ohnishi M."/>
            <person name="Kurokawa K."/>
            <person name="Ishii K."/>
            <person name="Yokoyama K."/>
            <person name="Han C.-G."/>
            <person name="Ohtsubo E."/>
            <person name="Nakayama K."/>
            <person name="Murata T."/>
            <person name="Tanaka M."/>
            <person name="Tobe T."/>
            <person name="Iida T."/>
            <person name="Takami H."/>
            <person name="Honda T."/>
            <person name="Sasakawa C."/>
            <person name="Ogasawara N."/>
            <person name="Yasunaga T."/>
            <person name="Kuhara S."/>
            <person name="Shiba T."/>
            <person name="Hattori M."/>
            <person name="Shinagawa H."/>
        </authorList>
    </citation>
    <scope>NUCLEOTIDE SEQUENCE [LARGE SCALE GENOMIC DNA]</scope>
    <source>
        <strain>O157:H7 / Sakai / RIMD 0509952 / EHEC</strain>
    </source>
</reference>
<feature type="chain" id="PRO_0000083936" description="Protein HdeD">
    <location>
        <begin position="1"/>
        <end position="190"/>
    </location>
</feature>
<feature type="topological domain" description="Cytoplasmic" evidence="2">
    <location>
        <begin position="1"/>
        <end position="25"/>
    </location>
</feature>
<feature type="transmembrane region" description="Helical" evidence="2">
    <location>
        <begin position="26"/>
        <end position="44"/>
    </location>
</feature>
<feature type="topological domain" description="Periplasmic" evidence="2">
    <location>
        <begin position="45"/>
        <end position="47"/>
    </location>
</feature>
<feature type="transmembrane region" description="Helical" evidence="2">
    <location>
        <begin position="48"/>
        <end position="70"/>
    </location>
</feature>
<feature type="topological domain" description="Cytoplasmic" evidence="2">
    <location>
        <begin position="71"/>
        <end position="76"/>
    </location>
</feature>
<feature type="transmembrane region" description="Helical" evidence="2">
    <location>
        <begin position="77"/>
        <end position="99"/>
    </location>
</feature>
<feature type="topological domain" description="Periplasmic" evidence="2">
    <location>
        <begin position="100"/>
        <end position="103"/>
    </location>
</feature>
<feature type="transmembrane region" description="Helical" evidence="2">
    <location>
        <begin position="104"/>
        <end position="126"/>
    </location>
</feature>
<feature type="topological domain" description="Cytoplasmic" evidence="2">
    <location>
        <begin position="127"/>
        <end position="138"/>
    </location>
</feature>
<feature type="transmembrane region" description="Helical" evidence="2">
    <location>
        <begin position="139"/>
        <end position="161"/>
    </location>
</feature>
<feature type="topological domain" description="Periplasmic" evidence="2">
    <location>
        <begin position="162"/>
        <end position="164"/>
    </location>
</feature>
<feature type="transmembrane region" description="Helical" evidence="2">
    <location>
        <begin position="165"/>
        <end position="187"/>
    </location>
</feature>
<feature type="topological domain" description="Cytoplasmic" evidence="2">
    <location>
        <begin position="188"/>
        <end position="190"/>
    </location>
</feature>
<protein>
    <recommendedName>
        <fullName>Protein HdeD</fullName>
    </recommendedName>
</protein>
<comment type="subcellular location">
    <subcellularLocation>
        <location evidence="1">Cell inner membrane</location>
        <topology evidence="1">Multi-pass membrane protein</topology>
    </subcellularLocation>
</comment>
<accession>P0AET6</accession>
<accession>P26603</accession>
<accession>P28326</accession>
<gene>
    <name type="primary">hdeD</name>
    <name type="ordered locus">Z4923</name>
    <name type="ordered locus">ECs4391</name>
</gene>
<evidence type="ECO:0000250" key="1"/>
<evidence type="ECO:0000255" key="2"/>
<name>HDED_ECO57</name>
<sequence>MLYIDKATILKFDLEMLKKHRRAIQFIAVLLFIVGLLCISFPFVSGDILSTVVGALLICSGIALIVGLFSNRSHNFWPVLSGFLVAVAYLLIGYFFIRAPELGIFAIAAFIAGLFCVAGVIRLMSWYRQRSMKGSWLQLVIGVLDIVIAWIFLGATPMVSVTLVSTLVGIELIFSAASLFSFASLFVKQQ</sequence>